<name>YR131_MIMIV</name>
<gene>
    <name type="ordered locus">MIMI_R131</name>
</gene>
<evidence type="ECO:0000305" key="1"/>
<feature type="chain" id="PRO_0000071217" description="Uncharacterized protein R131">
    <location>
        <begin position="1"/>
        <end position="178"/>
    </location>
</feature>
<proteinExistence type="inferred from homology"/>
<organism>
    <name type="scientific">Acanthamoeba polyphaga mimivirus</name>
    <name type="common">APMV</name>
    <dbReference type="NCBI Taxonomy" id="212035"/>
    <lineage>
        <taxon>Viruses</taxon>
        <taxon>Varidnaviria</taxon>
        <taxon>Bamfordvirae</taxon>
        <taxon>Nucleocytoviricota</taxon>
        <taxon>Megaviricetes</taxon>
        <taxon>Imitervirales</taxon>
        <taxon>Mimiviridae</taxon>
        <taxon>Megamimivirinae</taxon>
        <taxon>Mimivirus</taxon>
        <taxon>Mimivirus bradfordmassiliense</taxon>
    </lineage>
</organism>
<organismHost>
    <name type="scientific">Acanthamoeba polyphaga</name>
    <name type="common">Amoeba</name>
    <dbReference type="NCBI Taxonomy" id="5757"/>
</organismHost>
<dbReference type="EMBL" id="AY653733">
    <property type="protein sequence ID" value="AAV50406.1"/>
    <property type="molecule type" value="Genomic_DNA"/>
</dbReference>
<dbReference type="KEGG" id="vg:9924731"/>
<dbReference type="OrthoDB" id="37725at10239"/>
<dbReference type="Proteomes" id="UP000001134">
    <property type="component" value="Genome"/>
</dbReference>
<keyword id="KW-1185">Reference proteome</keyword>
<protein>
    <recommendedName>
        <fullName>Uncharacterized protein R131</fullName>
    </recommendedName>
</protein>
<reference key="1">
    <citation type="journal article" date="2004" name="Science">
        <title>The 1.2-megabase genome sequence of Mimivirus.</title>
        <authorList>
            <person name="Raoult D."/>
            <person name="Audic S."/>
            <person name="Robert C."/>
            <person name="Abergel C."/>
            <person name="Renesto P."/>
            <person name="Ogata H."/>
            <person name="La Scola B."/>
            <person name="Susan M."/>
            <person name="Claverie J.-M."/>
        </authorList>
    </citation>
    <scope>NUCLEOTIDE SEQUENCE [LARGE SCALE GENOMIC DNA]</scope>
    <source>
        <strain>Rowbotham-Bradford</strain>
    </source>
</reference>
<accession>Q5UPK4</accession>
<sequence>MEHNSISCANLLRKLFSGSFFEDKIIDFLATTLDDQAGSSEIDFKLLLTISDDFFSVISEKNFLMIESEAHKIDSPFPLKCVRFPKLISELSDGGSMRAKNKKALGLFVKNSLSTFGLYTDKKWEKVLIETKTFDHKKRVSYDDTIKITWYTRNDLVYLIVLTLKYLLLNQKDIIRNN</sequence>
<comment type="similarity">
    <text evidence="1">Belongs to the mimivirus L114/R131 family.</text>
</comment>